<accession>Q6ZT62</accession>
<name>BGIN_HUMAN</name>
<protein>
    <recommendedName>
        <fullName evidence="5">Bargin</fullName>
    </recommendedName>
    <alternativeName>
        <fullName evidence="7">Chimeric SH3BP1-PDXP protein</fullName>
    </alternativeName>
</protein>
<sequence length="677" mass="73599">MDRGLPGPATPAVTPQPPARPQDDEEAAAPHAAAGPDGQLGTVEQRLEPAKRAAHNIHKRLQACLQGQSGADMDKRVKKLPLMALSTTMAESFKELDPDSSMGKALEMSCAIQNQLARILAEFEMTLERDVLQPLSRLSEEELPAILKHKKSLQKLVSDWNTLKSRLSQATKNSGSSQGLGGSPGSHSHTTMANKVETLKEEEEELKRKVEQCRDEYLADLYHFVTKEDSYANYFIRLLEIQADYHRRSLSSLDTALAELRENHGQADHSPSMTATHFPRVYGVSLATHLQELGREIALPIEACVMMLLSEGMKEEGLFRLAAGASVLKRLKQTMASDPHSLEEFCSDPHAVAGALKSYLRELPEPLMTFDLYDDWMRAASLKEPGARLQALQEVCSRLPPENLSNLRYLMKFLARLAEEQEVNKMTPSNIAIVLGPNLLWPPEKEGDQAQLDAASVSSIQVVGVVEALIQSADTLFPGDINFNVSGLFSAVTLQDTVSDRLASEELPSTAVPTPATTPAPAPAPAPAPAPALASAATKERTESEVPPRPASPKVTRSPPETAAPVEDMARRSTGSLAAAVETASGRQALVVGKPSPYMFECITENFSIDPARTLMVGDRLETDILFGHRCGMTTVLTLTGVSRLEEAQAYLAAGQHDLVPHYYVESIADLTEGLED</sequence>
<dbReference type="EMBL" id="AK126873">
    <property type="protein sequence ID" value="BAC86732.1"/>
    <property type="status" value="ALT_SEQ"/>
    <property type="molecule type" value="mRNA"/>
</dbReference>
<dbReference type="EMBL" id="Z83844">
    <property type="status" value="NOT_ANNOTATED_CDS"/>
    <property type="molecule type" value="Genomic_DNA"/>
</dbReference>
<dbReference type="SMR" id="Q6ZT62"/>
<dbReference type="FunCoup" id="Q6ZT62">
    <property type="interactions" value="65"/>
</dbReference>
<dbReference type="STRING" id="9606.ENSP00000401076"/>
<dbReference type="GlyGen" id="Q6ZT62">
    <property type="glycosylation" value="4 sites, 1 O-linked glycan (1 site)"/>
</dbReference>
<dbReference type="iPTMnet" id="Q6ZT62"/>
<dbReference type="PhosphoSitePlus" id="Q6ZT62"/>
<dbReference type="BioMuta" id="BARGIN"/>
<dbReference type="jPOST" id="Q6ZT62"/>
<dbReference type="MassIVE" id="Q6ZT62"/>
<dbReference type="PeptideAtlas" id="Q6ZT62"/>
<dbReference type="Pumba" id="Q6ZT62"/>
<dbReference type="neXtProt" id="NX_Q6ZT62"/>
<dbReference type="InParanoid" id="Q6ZT62"/>
<dbReference type="OMA" id="HLAKFEC"/>
<dbReference type="PAN-GO" id="Q6ZT62">
    <property type="GO annotations" value="6 GO annotations based on evolutionary models"/>
</dbReference>
<dbReference type="Pharos" id="Q6ZT62">
    <property type="development level" value="Tbio"/>
</dbReference>
<dbReference type="Proteomes" id="UP000005640">
    <property type="component" value="Unplaced"/>
</dbReference>
<dbReference type="RNAct" id="Q6ZT62">
    <property type="molecule type" value="protein"/>
</dbReference>
<dbReference type="GO" id="GO:0005829">
    <property type="term" value="C:cytosol"/>
    <property type="evidence" value="ECO:0000314"/>
    <property type="project" value="UniProtKB"/>
</dbReference>
<dbReference type="GO" id="GO:0005886">
    <property type="term" value="C:plasma membrane"/>
    <property type="evidence" value="ECO:0000314"/>
    <property type="project" value="UniProtKB"/>
</dbReference>
<dbReference type="GO" id="GO:0005096">
    <property type="term" value="F:GTPase activator activity"/>
    <property type="evidence" value="ECO:0000315"/>
    <property type="project" value="UniProtKB"/>
</dbReference>
<dbReference type="GO" id="GO:1990450">
    <property type="term" value="F:linear polyubiquitin binding"/>
    <property type="evidence" value="ECO:0000314"/>
    <property type="project" value="UniProtKB"/>
</dbReference>
<dbReference type="GO" id="GO:0051058">
    <property type="term" value="P:negative regulation of small GTPase mediated signal transduction"/>
    <property type="evidence" value="ECO:0000315"/>
    <property type="project" value="UniProtKB"/>
</dbReference>
<dbReference type="GO" id="GO:0043547">
    <property type="term" value="P:positive regulation of GTPase activity"/>
    <property type="evidence" value="ECO:0000315"/>
    <property type="project" value="UniProtKB"/>
</dbReference>
<dbReference type="GO" id="GO:0032956">
    <property type="term" value="P:regulation of actin cytoskeleton organization"/>
    <property type="evidence" value="ECO:0000318"/>
    <property type="project" value="GO_Central"/>
</dbReference>
<dbReference type="GO" id="GO:0035020">
    <property type="term" value="P:regulation of Rac protein signal transduction"/>
    <property type="evidence" value="ECO:0000318"/>
    <property type="project" value="GO_Central"/>
</dbReference>
<dbReference type="GO" id="GO:0007165">
    <property type="term" value="P:signal transduction"/>
    <property type="evidence" value="ECO:0007669"/>
    <property type="project" value="InterPro"/>
</dbReference>
<dbReference type="FunFam" id="3.40.50.1000:FF:000163">
    <property type="entry name" value="Pyridoxal phosphate phosphatase"/>
    <property type="match status" value="1"/>
</dbReference>
<dbReference type="FunFam" id="1.10.555.10:FF:000001">
    <property type="entry name" value="Rho GTPase activating protein 44"/>
    <property type="match status" value="1"/>
</dbReference>
<dbReference type="FunFam" id="1.20.1270.60:FF:000053">
    <property type="entry name" value="SH3 domain-binding protein 1"/>
    <property type="match status" value="1"/>
</dbReference>
<dbReference type="Gene3D" id="1.20.1270.60">
    <property type="entry name" value="Arfaptin homology (AH) domain/BAR domain"/>
    <property type="match status" value="1"/>
</dbReference>
<dbReference type="Gene3D" id="3.40.50.1000">
    <property type="entry name" value="HAD superfamily/HAD-like"/>
    <property type="match status" value="1"/>
</dbReference>
<dbReference type="Gene3D" id="1.10.555.10">
    <property type="entry name" value="Rho GTPase activation protein"/>
    <property type="match status" value="1"/>
</dbReference>
<dbReference type="InterPro" id="IPR027267">
    <property type="entry name" value="AH/BAR_dom_sf"/>
</dbReference>
<dbReference type="InterPro" id="IPR004148">
    <property type="entry name" value="BAR_dom"/>
</dbReference>
<dbReference type="InterPro" id="IPR036412">
    <property type="entry name" value="HAD-like_sf"/>
</dbReference>
<dbReference type="InterPro" id="IPR023214">
    <property type="entry name" value="HAD_sf"/>
</dbReference>
<dbReference type="InterPro" id="IPR047165">
    <property type="entry name" value="RHG17/44/SH3BP1-like"/>
</dbReference>
<dbReference type="InterPro" id="IPR008936">
    <property type="entry name" value="Rho_GTPase_activation_prot"/>
</dbReference>
<dbReference type="InterPro" id="IPR000198">
    <property type="entry name" value="RhoGAP_dom"/>
</dbReference>
<dbReference type="PANTHER" id="PTHR14130">
    <property type="entry name" value="3BP-1 RELATED RHOGAP"/>
    <property type="match status" value="1"/>
</dbReference>
<dbReference type="PANTHER" id="PTHR14130:SF12">
    <property type="entry name" value="BARGIN-RELATED"/>
    <property type="match status" value="1"/>
</dbReference>
<dbReference type="Pfam" id="PF03114">
    <property type="entry name" value="BAR"/>
    <property type="match status" value="1"/>
</dbReference>
<dbReference type="Pfam" id="PF13242">
    <property type="entry name" value="Hydrolase_like"/>
    <property type="match status" value="1"/>
</dbReference>
<dbReference type="Pfam" id="PF00620">
    <property type="entry name" value="RhoGAP"/>
    <property type="match status" value="1"/>
</dbReference>
<dbReference type="SMART" id="SM00721">
    <property type="entry name" value="BAR"/>
    <property type="match status" value="1"/>
</dbReference>
<dbReference type="SMART" id="SM00324">
    <property type="entry name" value="RhoGAP"/>
    <property type="match status" value="1"/>
</dbReference>
<dbReference type="SUPFAM" id="SSF103657">
    <property type="entry name" value="BAR/IMD domain-like"/>
    <property type="match status" value="1"/>
</dbReference>
<dbReference type="SUPFAM" id="SSF48350">
    <property type="entry name" value="GTPase activation domain, GAP"/>
    <property type="match status" value="1"/>
</dbReference>
<dbReference type="SUPFAM" id="SSF56784">
    <property type="entry name" value="HAD-like"/>
    <property type="match status" value="1"/>
</dbReference>
<dbReference type="PROSITE" id="PS51021">
    <property type="entry name" value="BAR"/>
    <property type="match status" value="1"/>
</dbReference>
<dbReference type="PROSITE" id="PS50238">
    <property type="entry name" value="RHOGAP"/>
    <property type="match status" value="1"/>
</dbReference>
<keyword id="KW-0024">Alternative initiation</keyword>
<keyword id="KW-0025">Alternative splicing</keyword>
<keyword id="KW-1003">Cell membrane</keyword>
<keyword id="KW-0963">Cytoplasm</keyword>
<keyword id="KW-0343">GTPase activation</keyword>
<keyword id="KW-0472">Membrane</keyword>
<keyword id="KW-0597">Phosphoprotein</keyword>
<keyword id="KW-1185">Reference proteome</keyword>
<proteinExistence type="evidence at protein level"/>
<evidence type="ECO:0000255" key="1">
    <source>
        <dbReference type="PROSITE-ProRule" id="PRU00172"/>
    </source>
</evidence>
<evidence type="ECO:0000255" key="2">
    <source>
        <dbReference type="PROSITE-ProRule" id="PRU00361"/>
    </source>
</evidence>
<evidence type="ECO:0000256" key="3">
    <source>
        <dbReference type="SAM" id="MobiDB-lite"/>
    </source>
</evidence>
<evidence type="ECO:0000269" key="4">
    <source>
    </source>
</evidence>
<evidence type="ECO:0000303" key="5">
    <source>
    </source>
</evidence>
<evidence type="ECO:0000305" key="6"/>
<evidence type="ECO:0000305" key="7">
    <source>
    </source>
</evidence>
<evidence type="ECO:0007744" key="8">
    <source>
    </source>
</evidence>
<evidence type="ECO:0007744" key="9">
    <source>
    </source>
</evidence>
<evidence type="ECO:0007744" key="10">
    <source>
    </source>
</evidence>
<evidence type="ECO:0007744" key="11">
    <source>
    </source>
</evidence>
<evidence type="ECO:0007744" key="12">
    <source>
    </source>
</evidence>
<gene>
    <name evidence="5" type="primary">BARGIN</name>
</gene>
<feature type="chain" id="PRO_0000441926" description="Bargin">
    <location>
        <begin position="1"/>
        <end position="677"/>
    </location>
</feature>
<feature type="domain" description="BAR" evidence="2">
    <location>
        <begin position="25"/>
        <end position="270"/>
    </location>
</feature>
<feature type="domain" description="Rho-GAP" evidence="1">
    <location>
        <begin position="284"/>
        <end position="477"/>
    </location>
</feature>
<feature type="region of interest" description="Disordered" evidence="3">
    <location>
        <begin position="1"/>
        <end position="39"/>
    </location>
</feature>
<feature type="region of interest" description="Disordered" evidence="3">
    <location>
        <begin position="168"/>
        <end position="190"/>
    </location>
</feature>
<feature type="region of interest" description="Disordered" evidence="3">
    <location>
        <begin position="504"/>
        <end position="577"/>
    </location>
</feature>
<feature type="region of interest" description="Mediates non-covalent binding of poly-ubiquitin chains" evidence="4">
    <location>
        <begin position="574"/>
        <end position="677"/>
    </location>
</feature>
<feature type="compositionally biased region" description="Low complexity" evidence="3">
    <location>
        <begin position="1"/>
        <end position="13"/>
    </location>
</feature>
<feature type="compositionally biased region" description="Low complexity" evidence="3">
    <location>
        <begin position="29"/>
        <end position="39"/>
    </location>
</feature>
<feature type="compositionally biased region" description="Pro residues" evidence="3">
    <location>
        <begin position="516"/>
        <end position="530"/>
    </location>
</feature>
<feature type="site" description="Arginine finger; crucial for GTP hydrolysis by stabilizing the transition state" evidence="1">
    <location>
        <position position="320"/>
    </location>
</feature>
<feature type="modified residue" description="Phosphoserine" evidence="11">
    <location>
        <position position="183"/>
    </location>
</feature>
<feature type="modified residue" description="Phosphoserine" evidence="11 12">
    <location>
        <position position="270"/>
    </location>
</feature>
<feature type="modified residue" description="Phosphoserine" evidence="12">
    <location>
        <position position="272"/>
    </location>
</feature>
<feature type="modified residue" description="Phosphoserine" evidence="8 11 12">
    <location>
        <position position="552"/>
    </location>
</feature>
<feature type="modified residue" description="Phosphoserine" evidence="9 10 11">
    <location>
        <position position="558"/>
    </location>
</feature>
<feature type="splice variant" id="VSP_059138" description="In isoform Short BGIN.">
    <location>
        <begin position="1"/>
        <end position="72"/>
    </location>
</feature>
<comment type="function">
    <text evidence="4">GTPase activating protein (GAP) which specifically converts GTP-bound RAC1 and CDC42 in their inactive GDP-bound form. The GAP activity is enhanced by the non-covalent binding of K-29 and K-48 polyubiquitin chains.</text>
</comment>
<comment type="subcellular location">
    <subcellularLocation>
        <location evidence="4">Cell membrane</location>
        <topology evidence="7">Peripheral membrane protein</topology>
    </subcellularLocation>
    <subcellularLocation>
        <location evidence="4">Cytoplasm</location>
        <location evidence="4">Cytosol</location>
    </subcellularLocation>
    <text evidence="4">Localization to membranes is increased by binding of poly-ubiquitin chains (PubMed:23223568). Enriched in tangle aggregates in cells of Alzheimer's disease brain (PubMed:23223568).</text>
</comment>
<comment type="alternative products">
    <event type="alternative splicing"/>
    <event type="alternative initiation"/>
    <isoform>
        <id>Q6ZT62-1</id>
        <name evidence="5">Long BGIN</name>
        <sequence type="displayed"/>
    </isoform>
    <isoform>
        <id>Q6ZT62-2</id>
        <name evidence="5">Short BGIN</name>
        <sequence type="described" ref="VSP_059138"/>
    </isoform>
    <isoform>
        <id>Q9Y3L3-1</id>
        <name>1</name>
        <sequence type="external"/>
    </isoform>
    <isoform>
        <id>Q9Y3L3-2</id>
        <name>2</name>
        <sequence type="external"/>
    </isoform>
    <isoform>
        <id>Q96GD0-1</id>
        <name evidence="5">CIN</name>
        <sequence type="external"/>
    </isoform>
</comment>
<comment type="tissue specificity">
    <text evidence="4">Expressed in brain (at protein level).</text>
</comment>
<comment type="miscellaneous">
    <molecule>Isoform Long BGIN</molecule>
    <text evidence="4">Based on a naturally occurring readthrough transcript which produces a SH3BP1-PDXP fusion protein. Translation initiation occurs at a non-canonical CUG codon.</text>
</comment>
<comment type="miscellaneous">
    <molecule>Isoform Short BGIN</molecule>
    <text evidence="4">Produced by alternative initiation at Met-73 of isoform long BGIN.</text>
</comment>
<comment type="caution">
    <text evidence="4">Translation initiation occurs at a non-canonical CUG codon.</text>
</comment>
<comment type="sequence caution" evidence="6">
    <conflict type="erroneous initiation">
        <sequence resource="EMBL-CDS" id="BAC86732"/>
    </conflict>
    <text>Truncated N-terminus.</text>
</comment>
<comment type="sequence caution" evidence="6">
    <conflict type="miscellaneous discrepancy">
        <sequence resource="EMBL-CDS" id="BAC86732"/>
    </conflict>
    <text>Unusual initiator. The initiator methionine is coded by a non-canonical CTG leucine codon at position 73.</text>
</comment>
<organism>
    <name type="scientific">Homo sapiens</name>
    <name type="common">Human</name>
    <dbReference type="NCBI Taxonomy" id="9606"/>
    <lineage>
        <taxon>Eukaryota</taxon>
        <taxon>Metazoa</taxon>
        <taxon>Chordata</taxon>
        <taxon>Craniata</taxon>
        <taxon>Vertebrata</taxon>
        <taxon>Euteleostomi</taxon>
        <taxon>Mammalia</taxon>
        <taxon>Eutheria</taxon>
        <taxon>Euarchontoglires</taxon>
        <taxon>Primates</taxon>
        <taxon>Haplorrhini</taxon>
        <taxon>Catarrhini</taxon>
        <taxon>Hominidae</taxon>
        <taxon>Homo</taxon>
    </lineage>
</organism>
<reference key="1">
    <citation type="journal article" date="2004" name="Nat. Genet.">
        <title>Complete sequencing and characterization of 21,243 full-length human cDNAs.</title>
        <authorList>
            <person name="Ota T."/>
            <person name="Suzuki Y."/>
            <person name="Nishikawa T."/>
            <person name="Otsuki T."/>
            <person name="Sugiyama T."/>
            <person name="Irie R."/>
            <person name="Wakamatsu A."/>
            <person name="Hayashi K."/>
            <person name="Sato H."/>
            <person name="Nagai K."/>
            <person name="Kimura K."/>
            <person name="Makita H."/>
            <person name="Sekine M."/>
            <person name="Obayashi M."/>
            <person name="Nishi T."/>
            <person name="Shibahara T."/>
            <person name="Tanaka T."/>
            <person name="Ishii S."/>
            <person name="Yamamoto J."/>
            <person name="Saito K."/>
            <person name="Kawai Y."/>
            <person name="Isono Y."/>
            <person name="Nakamura Y."/>
            <person name="Nagahari K."/>
            <person name="Murakami K."/>
            <person name="Yasuda T."/>
            <person name="Iwayanagi T."/>
            <person name="Wagatsuma M."/>
            <person name="Shiratori A."/>
            <person name="Sudo H."/>
            <person name="Hosoiri T."/>
            <person name="Kaku Y."/>
            <person name="Kodaira H."/>
            <person name="Kondo H."/>
            <person name="Sugawara M."/>
            <person name="Takahashi M."/>
            <person name="Kanda K."/>
            <person name="Yokoi T."/>
            <person name="Furuya T."/>
            <person name="Kikkawa E."/>
            <person name="Omura Y."/>
            <person name="Abe K."/>
            <person name="Kamihara K."/>
            <person name="Katsuta N."/>
            <person name="Sato K."/>
            <person name="Tanikawa M."/>
            <person name="Yamazaki M."/>
            <person name="Ninomiya K."/>
            <person name="Ishibashi T."/>
            <person name="Yamashita H."/>
            <person name="Murakawa K."/>
            <person name="Fujimori K."/>
            <person name="Tanai H."/>
            <person name="Kimata M."/>
            <person name="Watanabe M."/>
            <person name="Hiraoka S."/>
            <person name="Chiba Y."/>
            <person name="Ishida S."/>
            <person name="Ono Y."/>
            <person name="Takiguchi S."/>
            <person name="Watanabe S."/>
            <person name="Yosida M."/>
            <person name="Hotuta T."/>
            <person name="Kusano J."/>
            <person name="Kanehori K."/>
            <person name="Takahashi-Fujii A."/>
            <person name="Hara H."/>
            <person name="Tanase T.-O."/>
            <person name="Nomura Y."/>
            <person name="Togiya S."/>
            <person name="Komai F."/>
            <person name="Hara R."/>
            <person name="Takeuchi K."/>
            <person name="Arita M."/>
            <person name="Imose N."/>
            <person name="Musashino K."/>
            <person name="Yuuki H."/>
            <person name="Oshima A."/>
            <person name="Sasaki N."/>
            <person name="Aotsuka S."/>
            <person name="Yoshikawa Y."/>
            <person name="Matsunawa H."/>
            <person name="Ichihara T."/>
            <person name="Shiohata N."/>
            <person name="Sano S."/>
            <person name="Moriya S."/>
            <person name="Momiyama H."/>
            <person name="Satoh N."/>
            <person name="Takami S."/>
            <person name="Terashima Y."/>
            <person name="Suzuki O."/>
            <person name="Nakagawa S."/>
            <person name="Senoh A."/>
            <person name="Mizoguchi H."/>
            <person name="Goto Y."/>
            <person name="Shimizu F."/>
            <person name="Wakebe H."/>
            <person name="Hishigaki H."/>
            <person name="Watanabe T."/>
            <person name="Sugiyama A."/>
            <person name="Takemoto M."/>
            <person name="Kawakami B."/>
            <person name="Yamazaki M."/>
            <person name="Watanabe K."/>
            <person name="Kumagai A."/>
            <person name="Itakura S."/>
            <person name="Fukuzumi Y."/>
            <person name="Fujimori Y."/>
            <person name="Komiyama M."/>
            <person name="Tashiro H."/>
            <person name="Tanigami A."/>
            <person name="Fujiwara T."/>
            <person name="Ono T."/>
            <person name="Yamada K."/>
            <person name="Fujii Y."/>
            <person name="Ozaki K."/>
            <person name="Hirao M."/>
            <person name="Ohmori Y."/>
            <person name="Kawabata A."/>
            <person name="Hikiji T."/>
            <person name="Kobatake N."/>
            <person name="Inagaki H."/>
            <person name="Ikema Y."/>
            <person name="Okamoto S."/>
            <person name="Okitani R."/>
            <person name="Kawakami T."/>
            <person name="Noguchi S."/>
            <person name="Itoh T."/>
            <person name="Shigeta K."/>
            <person name="Senba T."/>
            <person name="Matsumura K."/>
            <person name="Nakajima Y."/>
            <person name="Mizuno T."/>
            <person name="Morinaga M."/>
            <person name="Sasaki M."/>
            <person name="Togashi T."/>
            <person name="Oyama M."/>
            <person name="Hata H."/>
            <person name="Watanabe M."/>
            <person name="Komatsu T."/>
            <person name="Mizushima-Sugano J."/>
            <person name="Satoh T."/>
            <person name="Shirai Y."/>
            <person name="Takahashi Y."/>
            <person name="Nakagawa K."/>
            <person name="Okumura K."/>
            <person name="Nagase T."/>
            <person name="Nomura N."/>
            <person name="Kikuchi H."/>
            <person name="Masuho Y."/>
            <person name="Yamashita R."/>
            <person name="Nakai K."/>
            <person name="Yada T."/>
            <person name="Nakamura Y."/>
            <person name="Ohara O."/>
            <person name="Isogai T."/>
            <person name="Sugano S."/>
        </authorList>
    </citation>
    <scope>NUCLEOTIDE SEQUENCE [LARGE SCALE MRNA] (ISOFORM 1)</scope>
    <source>
        <tissue>Amygdala</tissue>
    </source>
</reference>
<reference key="2">
    <citation type="journal article" date="1999" name="Nature">
        <title>The DNA sequence of human chromosome 22.</title>
        <authorList>
            <person name="Dunham I."/>
            <person name="Hunt A.R."/>
            <person name="Collins J.E."/>
            <person name="Bruskiewich R."/>
            <person name="Beare D.M."/>
            <person name="Clamp M."/>
            <person name="Smink L.J."/>
            <person name="Ainscough R."/>
            <person name="Almeida J.P."/>
            <person name="Babbage A.K."/>
            <person name="Bagguley C."/>
            <person name="Bailey J."/>
            <person name="Barlow K.F."/>
            <person name="Bates K.N."/>
            <person name="Beasley O.P."/>
            <person name="Bird C.P."/>
            <person name="Blakey S.E."/>
            <person name="Bridgeman A.M."/>
            <person name="Buck D."/>
            <person name="Burgess J."/>
            <person name="Burrill W.D."/>
            <person name="Burton J."/>
            <person name="Carder C."/>
            <person name="Carter N.P."/>
            <person name="Chen Y."/>
            <person name="Clark G."/>
            <person name="Clegg S.M."/>
            <person name="Cobley V.E."/>
            <person name="Cole C.G."/>
            <person name="Collier R.E."/>
            <person name="Connor R."/>
            <person name="Conroy D."/>
            <person name="Corby N.R."/>
            <person name="Coville G.J."/>
            <person name="Cox A.V."/>
            <person name="Davis J."/>
            <person name="Dawson E."/>
            <person name="Dhami P.D."/>
            <person name="Dockree C."/>
            <person name="Dodsworth S.J."/>
            <person name="Durbin R.M."/>
            <person name="Ellington A.G."/>
            <person name="Evans K.L."/>
            <person name="Fey J.M."/>
            <person name="Fleming K."/>
            <person name="French L."/>
            <person name="Garner A.A."/>
            <person name="Gilbert J.G.R."/>
            <person name="Goward M.E."/>
            <person name="Grafham D.V."/>
            <person name="Griffiths M.N.D."/>
            <person name="Hall C."/>
            <person name="Hall R.E."/>
            <person name="Hall-Tamlyn G."/>
            <person name="Heathcott R.W."/>
            <person name="Ho S."/>
            <person name="Holmes S."/>
            <person name="Hunt S.E."/>
            <person name="Jones M.C."/>
            <person name="Kershaw J."/>
            <person name="Kimberley A.M."/>
            <person name="King A."/>
            <person name="Laird G.K."/>
            <person name="Langford C.F."/>
            <person name="Leversha M.A."/>
            <person name="Lloyd C."/>
            <person name="Lloyd D.M."/>
            <person name="Martyn I.D."/>
            <person name="Mashreghi-Mohammadi M."/>
            <person name="Matthews L.H."/>
            <person name="Mccann O.T."/>
            <person name="Mcclay J."/>
            <person name="Mclaren S."/>
            <person name="McMurray A.A."/>
            <person name="Milne S.A."/>
            <person name="Mortimore B.J."/>
            <person name="Odell C.N."/>
            <person name="Pavitt R."/>
            <person name="Pearce A.V."/>
            <person name="Pearson D."/>
            <person name="Phillimore B.J.C.T."/>
            <person name="Phillips S.H."/>
            <person name="Plumb R.W."/>
            <person name="Ramsay H."/>
            <person name="Ramsey Y."/>
            <person name="Rogers L."/>
            <person name="Ross M.T."/>
            <person name="Scott C.E."/>
            <person name="Sehra H.K."/>
            <person name="Skuce C.D."/>
            <person name="Smalley S."/>
            <person name="Smith M.L."/>
            <person name="Soderlund C."/>
            <person name="Spragon L."/>
            <person name="Steward C.A."/>
            <person name="Sulston J.E."/>
            <person name="Swann R.M."/>
            <person name="Vaudin M."/>
            <person name="Wall M."/>
            <person name="Wallis J.M."/>
            <person name="Whiteley M.N."/>
            <person name="Willey D.L."/>
            <person name="Williams L."/>
            <person name="Williams S.A."/>
            <person name="Williamson H."/>
            <person name="Wilmer T.E."/>
            <person name="Wilming L."/>
            <person name="Wright C.L."/>
            <person name="Hubbard T."/>
            <person name="Bentley D.R."/>
            <person name="Beck S."/>
            <person name="Rogers J."/>
            <person name="Shimizu N."/>
            <person name="Minoshima S."/>
            <person name="Kawasaki K."/>
            <person name="Sasaki T."/>
            <person name="Asakawa S."/>
            <person name="Kudoh J."/>
            <person name="Shintani A."/>
            <person name="Shibuya K."/>
            <person name="Yoshizaki Y."/>
            <person name="Aoki N."/>
            <person name="Mitsuyama S."/>
            <person name="Roe B.A."/>
            <person name="Chen F."/>
            <person name="Chu L."/>
            <person name="Crabtree J."/>
            <person name="Deschamps S."/>
            <person name="Do A."/>
            <person name="Do T."/>
            <person name="Dorman A."/>
            <person name="Fang F."/>
            <person name="Fu Y."/>
            <person name="Hu P."/>
            <person name="Hua A."/>
            <person name="Kenton S."/>
            <person name="Lai H."/>
            <person name="Lao H.I."/>
            <person name="Lewis J."/>
            <person name="Lewis S."/>
            <person name="Lin S.-P."/>
            <person name="Loh P."/>
            <person name="Malaj E."/>
            <person name="Nguyen T."/>
            <person name="Pan H."/>
            <person name="Phan S."/>
            <person name="Qi S."/>
            <person name="Qian Y."/>
            <person name="Ray L."/>
            <person name="Ren Q."/>
            <person name="Shaull S."/>
            <person name="Sloan D."/>
            <person name="Song L."/>
            <person name="Wang Q."/>
            <person name="Wang Y."/>
            <person name="Wang Z."/>
            <person name="White J."/>
            <person name="Willingham D."/>
            <person name="Wu H."/>
            <person name="Yao Z."/>
            <person name="Zhan M."/>
            <person name="Zhang G."/>
            <person name="Chissoe S."/>
            <person name="Murray J."/>
            <person name="Miller N."/>
            <person name="Minx P."/>
            <person name="Fulton R."/>
            <person name="Johnson D."/>
            <person name="Bemis G."/>
            <person name="Bentley D."/>
            <person name="Bradshaw H."/>
            <person name="Bourne S."/>
            <person name="Cordes M."/>
            <person name="Du Z."/>
            <person name="Fulton L."/>
            <person name="Goela D."/>
            <person name="Graves T."/>
            <person name="Hawkins J."/>
            <person name="Hinds K."/>
            <person name="Kemp K."/>
            <person name="Latreille P."/>
            <person name="Layman D."/>
            <person name="Ozersky P."/>
            <person name="Rohlfing T."/>
            <person name="Scheet P."/>
            <person name="Walker C."/>
            <person name="Wamsley A."/>
            <person name="Wohldmann P."/>
            <person name="Pepin K."/>
            <person name="Nelson J."/>
            <person name="Korf I."/>
            <person name="Bedell J.A."/>
            <person name="Hillier L.W."/>
            <person name="Mardis E."/>
            <person name="Waterston R."/>
            <person name="Wilson R."/>
            <person name="Emanuel B.S."/>
            <person name="Shaikh T."/>
            <person name="Kurahashi H."/>
            <person name="Saitta S."/>
            <person name="Budarf M.L."/>
            <person name="McDermid H.E."/>
            <person name="Johnson A."/>
            <person name="Wong A.C.C."/>
            <person name="Morrow B.E."/>
            <person name="Edelmann L."/>
            <person name="Kim U.J."/>
            <person name="Shizuya H."/>
            <person name="Simon M.I."/>
            <person name="Dumanski J.P."/>
            <person name="Peyrard M."/>
            <person name="Kedra D."/>
            <person name="Seroussi E."/>
            <person name="Fransson I."/>
            <person name="Tapia I."/>
            <person name="Bruder C.E."/>
            <person name="O'Brien K.P."/>
            <person name="Wilkinson P."/>
            <person name="Bodenteich A."/>
            <person name="Hartman K."/>
            <person name="Hu X."/>
            <person name="Khan A.S."/>
            <person name="Lane L."/>
            <person name="Tilahun Y."/>
            <person name="Wright H."/>
        </authorList>
    </citation>
    <scope>NUCLEOTIDE SEQUENCE [LARGE SCALE GENOMIC DNA]</scope>
</reference>
<reference key="3">
    <citation type="journal article" date="2008" name="J. Proteome Res.">
        <title>Phosphorylation analysis of primary human T lymphocytes using sequential IMAC and titanium oxide enrichment.</title>
        <authorList>
            <person name="Carrascal M."/>
            <person name="Ovelleiro D."/>
            <person name="Casas V."/>
            <person name="Gay M."/>
            <person name="Abian J."/>
        </authorList>
    </citation>
    <scope>PHOSPHORYLATION [LARGE SCALE ANALYSIS] AT SER-552</scope>
    <scope>IDENTIFICATION BY MASS SPECTROMETRY [LARGE SCALE ANALYSIS]</scope>
    <source>
        <tissue>T-cell</tissue>
    </source>
</reference>
<reference key="4">
    <citation type="journal article" date="2009" name="Sci. Signal.">
        <title>Quantitative phosphoproteomic analysis of T cell receptor signaling reveals system-wide modulation of protein-protein interactions.</title>
        <authorList>
            <person name="Mayya V."/>
            <person name="Lundgren D.H."/>
            <person name="Hwang S.-I."/>
            <person name="Rezaul K."/>
            <person name="Wu L."/>
            <person name="Eng J.K."/>
            <person name="Rodionov V."/>
            <person name="Han D.K."/>
        </authorList>
    </citation>
    <scope>PHOSPHORYLATION [LARGE SCALE ANALYSIS] AT SER-558</scope>
    <scope>IDENTIFICATION BY MASS SPECTROMETRY [LARGE SCALE ANALYSIS]</scope>
    <source>
        <tissue>Leukemic T-cell</tissue>
    </source>
</reference>
<reference key="5">
    <citation type="journal article" date="2011" name="BMC Syst. Biol.">
        <title>Initial characterization of the human central proteome.</title>
        <authorList>
            <person name="Burkard T.R."/>
            <person name="Planyavsky M."/>
            <person name="Kaupe I."/>
            <person name="Breitwieser F.P."/>
            <person name="Buerckstuemmer T."/>
            <person name="Bennett K.L."/>
            <person name="Superti-Furga G."/>
            <person name="Colinge J."/>
        </authorList>
    </citation>
    <scope>IDENTIFICATION BY MASS SPECTROMETRY [LARGE SCALE ANALYSIS]</scope>
</reference>
<reference key="6">
    <citation type="journal article" date="2011" name="Sci. Signal.">
        <title>System-wide temporal characterization of the proteome and phosphoproteome of human embryonic stem cell differentiation.</title>
        <authorList>
            <person name="Rigbolt K.T."/>
            <person name="Prokhorova T.A."/>
            <person name="Akimov V."/>
            <person name="Henningsen J."/>
            <person name="Johansen P.T."/>
            <person name="Kratchmarova I."/>
            <person name="Kassem M."/>
            <person name="Mann M."/>
            <person name="Olsen J.V."/>
            <person name="Blagoev B."/>
        </authorList>
    </citation>
    <scope>PHOSPHORYLATION [LARGE SCALE ANALYSIS] AT SER-558</scope>
    <scope>IDENTIFICATION BY MASS SPECTROMETRY [LARGE SCALE ANALYSIS]</scope>
</reference>
<reference key="7">
    <citation type="journal article" date="2013" name="J. Proteome Res.">
        <title>Toward a comprehensive characterization of a human cancer cell phosphoproteome.</title>
        <authorList>
            <person name="Zhou H."/>
            <person name="Di Palma S."/>
            <person name="Preisinger C."/>
            <person name="Peng M."/>
            <person name="Polat A.N."/>
            <person name="Heck A.J."/>
            <person name="Mohammed S."/>
        </authorList>
    </citation>
    <scope>PHOSPHORYLATION [LARGE SCALE ANALYSIS] AT SER-183; SER-270; SER-552 AND SER-558</scope>
    <scope>IDENTIFICATION BY MASS SPECTROMETRY [LARGE SCALE ANALYSIS]</scope>
    <source>
        <tissue>Cervix carcinoma</tissue>
        <tissue>Erythroleukemia</tissue>
    </source>
</reference>
<reference key="8">
    <citation type="journal article" date="2013" name="Mol. Biol. Cell">
        <title>A novel Rac1 GAP splice variant relays poly-Ub accumulation signals to mediate Rac1 inactivation.</title>
        <authorList>
            <person name="Huang T.Y."/>
            <person name="Michael S."/>
            <person name="Xu T."/>
            <person name="Sarkeshik A."/>
            <person name="Moresco J.J."/>
            <person name="Yates J.R. III"/>
            <person name="Masliah E."/>
            <person name="Bokoch G.M."/>
            <person name="DerMardirossian C."/>
        </authorList>
    </citation>
    <scope>FUNCTION</scope>
    <scope>ALTERNATIVE SPLICING (ISOFORMS LONG BGIN AND SHORT BGIN)</scope>
    <scope>SUBCELLULAR LOCATION</scope>
    <scope>TISSUE SPECIFICITY</scope>
    <scope>CAUTION</scope>
    <scope>REGION</scope>
</reference>
<reference key="9">
    <citation type="journal article" date="2014" name="J. Proteomics">
        <title>An enzyme assisted RP-RPLC approach for in-depth analysis of human liver phosphoproteome.</title>
        <authorList>
            <person name="Bian Y."/>
            <person name="Song C."/>
            <person name="Cheng K."/>
            <person name="Dong M."/>
            <person name="Wang F."/>
            <person name="Huang J."/>
            <person name="Sun D."/>
            <person name="Wang L."/>
            <person name="Ye M."/>
            <person name="Zou H."/>
        </authorList>
    </citation>
    <scope>PHOSPHORYLATION [LARGE SCALE ANALYSIS] AT SER-270; SER-272 AND SER-552</scope>
    <scope>IDENTIFICATION BY MASS SPECTROMETRY [LARGE SCALE ANALYSIS]</scope>
    <source>
        <tissue>Liver</tissue>
    </source>
</reference>